<sequence length="353" mass="38593">MSEIFDVNAAIYPFPARPVPLDTNEKAFYREKIKTLLKQRDAVLVAHYYTDPEIQALAEETGGCVADSLEMARFGNNHPASTLLVAGVRFMGETAKILNPEKKVLMPTLNAECSLDLGCPVDEFTAFCDSHPDRTVVVYANTSAAVKAKADWVVTSSIAVELIEHLDSLGEKIIWAPDRHLGSYVQKKSGADVLCWQGACIVHDEFKTQALARMKALYPDAAVLVHPESPQAVVDMADAVGSTSQLIQAAKTLPQKTLIVATDRGIFYKMQQACPDKELFEAPTAGEGATCRSCAHCPWMAMNGLRAIAEGLEQGGVMHEIHVDEELRQQALIPLNRMLDFANQLKLQVKGNA</sequence>
<comment type="function">
    <text evidence="1">Catalyzes the condensation of iminoaspartate with dihydroxyacetone phosphate to form quinolinate.</text>
</comment>
<comment type="catalytic activity">
    <reaction evidence="1">
        <text>iminosuccinate + dihydroxyacetone phosphate = quinolinate + phosphate + 2 H2O + H(+)</text>
        <dbReference type="Rhea" id="RHEA:25888"/>
        <dbReference type="ChEBI" id="CHEBI:15377"/>
        <dbReference type="ChEBI" id="CHEBI:15378"/>
        <dbReference type="ChEBI" id="CHEBI:29959"/>
        <dbReference type="ChEBI" id="CHEBI:43474"/>
        <dbReference type="ChEBI" id="CHEBI:57642"/>
        <dbReference type="ChEBI" id="CHEBI:77875"/>
        <dbReference type="EC" id="2.5.1.72"/>
    </reaction>
    <physiologicalReaction direction="left-to-right" evidence="1">
        <dbReference type="Rhea" id="RHEA:25889"/>
    </physiologicalReaction>
</comment>
<comment type="cofactor">
    <cofactor evidence="1">
        <name>[4Fe-4S] cluster</name>
        <dbReference type="ChEBI" id="CHEBI:49883"/>
    </cofactor>
    <text evidence="1">Binds 1 [4Fe-4S] cluster per subunit.</text>
</comment>
<comment type="pathway">
    <text evidence="1">Cofactor biosynthesis; NAD(+) biosynthesis; quinolinate from iminoaspartate: step 1/1.</text>
</comment>
<comment type="subcellular location">
    <subcellularLocation>
        <location evidence="1">Cytoplasm</location>
    </subcellularLocation>
</comment>
<comment type="similarity">
    <text evidence="1">Belongs to the quinolinate synthase family. Type 1 subfamily.</text>
</comment>
<evidence type="ECO:0000255" key="1">
    <source>
        <dbReference type="HAMAP-Rule" id="MF_00567"/>
    </source>
</evidence>
<feature type="chain" id="PRO_1000129431" description="Quinolinate synthase">
    <location>
        <begin position="1"/>
        <end position="353"/>
    </location>
</feature>
<feature type="binding site" evidence="1">
    <location>
        <position position="47"/>
    </location>
    <ligand>
        <name>iminosuccinate</name>
        <dbReference type="ChEBI" id="CHEBI:77875"/>
    </ligand>
</feature>
<feature type="binding site" evidence="1">
    <location>
        <position position="68"/>
    </location>
    <ligand>
        <name>iminosuccinate</name>
        <dbReference type="ChEBI" id="CHEBI:77875"/>
    </ligand>
</feature>
<feature type="binding site" evidence="1">
    <location>
        <position position="113"/>
    </location>
    <ligand>
        <name>[4Fe-4S] cluster</name>
        <dbReference type="ChEBI" id="CHEBI:49883"/>
    </ligand>
</feature>
<feature type="binding site" evidence="1">
    <location>
        <begin position="139"/>
        <end position="141"/>
    </location>
    <ligand>
        <name>iminosuccinate</name>
        <dbReference type="ChEBI" id="CHEBI:77875"/>
    </ligand>
</feature>
<feature type="binding site" evidence="1">
    <location>
        <position position="156"/>
    </location>
    <ligand>
        <name>iminosuccinate</name>
        <dbReference type="ChEBI" id="CHEBI:77875"/>
    </ligand>
</feature>
<feature type="binding site" evidence="1">
    <location>
        <position position="200"/>
    </location>
    <ligand>
        <name>[4Fe-4S] cluster</name>
        <dbReference type="ChEBI" id="CHEBI:49883"/>
    </ligand>
</feature>
<feature type="binding site" evidence="1">
    <location>
        <begin position="226"/>
        <end position="228"/>
    </location>
    <ligand>
        <name>iminosuccinate</name>
        <dbReference type="ChEBI" id="CHEBI:77875"/>
    </ligand>
</feature>
<feature type="binding site" evidence="1">
    <location>
        <position position="243"/>
    </location>
    <ligand>
        <name>iminosuccinate</name>
        <dbReference type="ChEBI" id="CHEBI:77875"/>
    </ligand>
</feature>
<feature type="binding site" evidence="1">
    <location>
        <position position="297"/>
    </location>
    <ligand>
        <name>[4Fe-4S] cluster</name>
        <dbReference type="ChEBI" id="CHEBI:49883"/>
    </ligand>
</feature>
<protein>
    <recommendedName>
        <fullName evidence="1">Quinolinate synthase</fullName>
        <ecNumber evidence="1">2.5.1.72</ecNumber>
    </recommendedName>
</protein>
<reference key="1">
    <citation type="journal article" date="2010" name="J. Bacteriol.">
        <title>Genome sequence of the deep-rooted Yersinia pestis strain Angola reveals new insights into the evolution and pangenome of the plague bacterium.</title>
        <authorList>
            <person name="Eppinger M."/>
            <person name="Worsham P.L."/>
            <person name="Nikolich M.P."/>
            <person name="Riley D.R."/>
            <person name="Sebastian Y."/>
            <person name="Mou S."/>
            <person name="Achtman M."/>
            <person name="Lindler L.E."/>
            <person name="Ravel J."/>
        </authorList>
    </citation>
    <scope>NUCLEOTIDE SEQUENCE [LARGE SCALE GENOMIC DNA]</scope>
    <source>
        <strain>Angola</strain>
    </source>
</reference>
<proteinExistence type="inferred from homology"/>
<dbReference type="EC" id="2.5.1.72" evidence="1"/>
<dbReference type="EMBL" id="CP000901">
    <property type="protein sequence ID" value="ABX86606.1"/>
    <property type="molecule type" value="Genomic_DNA"/>
</dbReference>
<dbReference type="RefSeq" id="WP_002210741.1">
    <property type="nucleotide sequence ID" value="NZ_CP009935.1"/>
</dbReference>
<dbReference type="SMR" id="A9R3A9"/>
<dbReference type="GeneID" id="57977266"/>
<dbReference type="KEGG" id="ypg:YpAngola_A1403"/>
<dbReference type="PATRIC" id="fig|349746.12.peg.2367"/>
<dbReference type="UniPathway" id="UPA00253">
    <property type="reaction ID" value="UER00327"/>
</dbReference>
<dbReference type="GO" id="GO:0005829">
    <property type="term" value="C:cytosol"/>
    <property type="evidence" value="ECO:0007669"/>
    <property type="project" value="TreeGrafter"/>
</dbReference>
<dbReference type="GO" id="GO:0051539">
    <property type="term" value="F:4 iron, 4 sulfur cluster binding"/>
    <property type="evidence" value="ECO:0007669"/>
    <property type="project" value="UniProtKB-KW"/>
</dbReference>
<dbReference type="GO" id="GO:0046872">
    <property type="term" value="F:metal ion binding"/>
    <property type="evidence" value="ECO:0007669"/>
    <property type="project" value="UniProtKB-KW"/>
</dbReference>
<dbReference type="GO" id="GO:0008987">
    <property type="term" value="F:quinolinate synthetase A activity"/>
    <property type="evidence" value="ECO:0007669"/>
    <property type="project" value="UniProtKB-UniRule"/>
</dbReference>
<dbReference type="GO" id="GO:0034628">
    <property type="term" value="P:'de novo' NAD biosynthetic process from L-aspartate"/>
    <property type="evidence" value="ECO:0007669"/>
    <property type="project" value="TreeGrafter"/>
</dbReference>
<dbReference type="FunFam" id="3.40.50.10800:FF:000003">
    <property type="entry name" value="Quinolinate synthase A"/>
    <property type="match status" value="1"/>
</dbReference>
<dbReference type="Gene3D" id="3.40.50.10800">
    <property type="entry name" value="NadA-like"/>
    <property type="match status" value="3"/>
</dbReference>
<dbReference type="HAMAP" id="MF_00567">
    <property type="entry name" value="NadA_type1"/>
    <property type="match status" value="1"/>
</dbReference>
<dbReference type="InterPro" id="IPR003473">
    <property type="entry name" value="NadA"/>
</dbReference>
<dbReference type="InterPro" id="IPR036094">
    <property type="entry name" value="NadA_sf"/>
</dbReference>
<dbReference type="InterPro" id="IPR023513">
    <property type="entry name" value="Quinolinate_synth_A_type1"/>
</dbReference>
<dbReference type="NCBIfam" id="TIGR00550">
    <property type="entry name" value="nadA"/>
    <property type="match status" value="1"/>
</dbReference>
<dbReference type="NCBIfam" id="NF006877">
    <property type="entry name" value="PRK09375.1-1"/>
    <property type="match status" value="1"/>
</dbReference>
<dbReference type="NCBIfam" id="NF006878">
    <property type="entry name" value="PRK09375.1-2"/>
    <property type="match status" value="1"/>
</dbReference>
<dbReference type="PANTHER" id="PTHR30573:SF0">
    <property type="entry name" value="QUINOLINATE SYNTHASE, CHLOROPLASTIC"/>
    <property type="match status" value="1"/>
</dbReference>
<dbReference type="PANTHER" id="PTHR30573">
    <property type="entry name" value="QUINOLINATE SYNTHETASE A"/>
    <property type="match status" value="1"/>
</dbReference>
<dbReference type="Pfam" id="PF02445">
    <property type="entry name" value="NadA"/>
    <property type="match status" value="1"/>
</dbReference>
<dbReference type="SUPFAM" id="SSF142754">
    <property type="entry name" value="NadA-like"/>
    <property type="match status" value="1"/>
</dbReference>
<keyword id="KW-0004">4Fe-4S</keyword>
<keyword id="KW-0963">Cytoplasm</keyword>
<keyword id="KW-0408">Iron</keyword>
<keyword id="KW-0411">Iron-sulfur</keyword>
<keyword id="KW-0479">Metal-binding</keyword>
<keyword id="KW-0662">Pyridine nucleotide biosynthesis</keyword>
<keyword id="KW-0808">Transferase</keyword>
<name>NADA_YERPG</name>
<accession>A9R3A9</accession>
<organism>
    <name type="scientific">Yersinia pestis bv. Antiqua (strain Angola)</name>
    <dbReference type="NCBI Taxonomy" id="349746"/>
    <lineage>
        <taxon>Bacteria</taxon>
        <taxon>Pseudomonadati</taxon>
        <taxon>Pseudomonadota</taxon>
        <taxon>Gammaproteobacteria</taxon>
        <taxon>Enterobacterales</taxon>
        <taxon>Yersiniaceae</taxon>
        <taxon>Yersinia</taxon>
    </lineage>
</organism>
<gene>
    <name evidence="1" type="primary">nadA</name>
    <name type="ordered locus">YpAngola_A1403</name>
</gene>